<gene>
    <name evidence="1" type="primary">tgt</name>
    <name type="ordered locus">CF0419</name>
</gene>
<dbReference type="EC" id="2.4.2.29" evidence="1"/>
<dbReference type="EMBL" id="AP006861">
    <property type="protein sequence ID" value="BAE81191.1"/>
    <property type="molecule type" value="Genomic_DNA"/>
</dbReference>
<dbReference type="RefSeq" id="WP_011457971.1">
    <property type="nucleotide sequence ID" value="NC_007899.1"/>
</dbReference>
<dbReference type="SMR" id="Q254U7"/>
<dbReference type="STRING" id="264202.CF0419"/>
<dbReference type="KEGG" id="cfe:CF0419"/>
<dbReference type="eggNOG" id="COG0343">
    <property type="taxonomic scope" value="Bacteria"/>
</dbReference>
<dbReference type="HOGENOM" id="CLU_022060_0_2_0"/>
<dbReference type="OrthoDB" id="9805417at2"/>
<dbReference type="UniPathway" id="UPA00392"/>
<dbReference type="Proteomes" id="UP000001260">
    <property type="component" value="Chromosome"/>
</dbReference>
<dbReference type="GO" id="GO:0046872">
    <property type="term" value="F:metal ion binding"/>
    <property type="evidence" value="ECO:0007669"/>
    <property type="project" value="UniProtKB-KW"/>
</dbReference>
<dbReference type="GO" id="GO:0008479">
    <property type="term" value="F:tRNA-guanosine(34) queuine transglycosylase activity"/>
    <property type="evidence" value="ECO:0007669"/>
    <property type="project" value="UniProtKB-UniRule"/>
</dbReference>
<dbReference type="GO" id="GO:0008616">
    <property type="term" value="P:queuosine biosynthetic process"/>
    <property type="evidence" value="ECO:0007669"/>
    <property type="project" value="UniProtKB-UniRule"/>
</dbReference>
<dbReference type="GO" id="GO:0101030">
    <property type="term" value="P:tRNA-guanine transglycosylation"/>
    <property type="evidence" value="ECO:0007669"/>
    <property type="project" value="InterPro"/>
</dbReference>
<dbReference type="Gene3D" id="3.20.20.105">
    <property type="entry name" value="Queuine tRNA-ribosyltransferase-like"/>
    <property type="match status" value="1"/>
</dbReference>
<dbReference type="HAMAP" id="MF_00168">
    <property type="entry name" value="Q_tRNA_Tgt"/>
    <property type="match status" value="1"/>
</dbReference>
<dbReference type="InterPro" id="IPR004803">
    <property type="entry name" value="TGT"/>
</dbReference>
<dbReference type="InterPro" id="IPR036511">
    <property type="entry name" value="TGT-like_sf"/>
</dbReference>
<dbReference type="InterPro" id="IPR002616">
    <property type="entry name" value="tRNA_ribo_trans-like"/>
</dbReference>
<dbReference type="NCBIfam" id="TIGR00430">
    <property type="entry name" value="Q_tRNA_tgt"/>
    <property type="match status" value="1"/>
</dbReference>
<dbReference type="NCBIfam" id="TIGR00449">
    <property type="entry name" value="tgt_general"/>
    <property type="match status" value="1"/>
</dbReference>
<dbReference type="PANTHER" id="PTHR43468">
    <property type="match status" value="1"/>
</dbReference>
<dbReference type="PANTHER" id="PTHR43468:SF1">
    <property type="entry name" value="TRNA-GUANOSINE(34) QUEUINE TRANSGLYCOSYLASE"/>
    <property type="match status" value="1"/>
</dbReference>
<dbReference type="Pfam" id="PF01702">
    <property type="entry name" value="TGT"/>
    <property type="match status" value="1"/>
</dbReference>
<dbReference type="SUPFAM" id="SSF51713">
    <property type="entry name" value="tRNA-guanine transglycosylase"/>
    <property type="match status" value="1"/>
</dbReference>
<reference key="1">
    <citation type="journal article" date="2006" name="DNA Res.">
        <title>Genome sequence of the cat pathogen, Chlamydophila felis.</title>
        <authorList>
            <person name="Azuma Y."/>
            <person name="Hirakawa H."/>
            <person name="Yamashita A."/>
            <person name="Cai Y."/>
            <person name="Rahman M.A."/>
            <person name="Suzuki H."/>
            <person name="Mitaku S."/>
            <person name="Toh H."/>
            <person name="Goto S."/>
            <person name="Murakami T."/>
            <person name="Sugi K."/>
            <person name="Hayashi H."/>
            <person name="Fukushi H."/>
            <person name="Hattori M."/>
            <person name="Kuhara S."/>
            <person name="Shirai M."/>
        </authorList>
    </citation>
    <scope>NUCLEOTIDE SEQUENCE [LARGE SCALE GENOMIC DNA]</scope>
    <source>
        <strain>Fe/C-56</strain>
    </source>
</reference>
<evidence type="ECO:0000255" key="1">
    <source>
        <dbReference type="HAMAP-Rule" id="MF_00168"/>
    </source>
</evidence>
<organism>
    <name type="scientific">Chlamydia felis (strain Fe/C-56)</name>
    <name type="common">Chlamydophila felis</name>
    <dbReference type="NCBI Taxonomy" id="264202"/>
    <lineage>
        <taxon>Bacteria</taxon>
        <taxon>Pseudomonadati</taxon>
        <taxon>Chlamydiota</taxon>
        <taxon>Chlamydiia</taxon>
        <taxon>Chlamydiales</taxon>
        <taxon>Chlamydiaceae</taxon>
        <taxon>Chlamydia/Chlamydophila group</taxon>
        <taxon>Chlamydia</taxon>
    </lineage>
</organism>
<name>TGT_CHLFF</name>
<proteinExistence type="inferred from homology"/>
<accession>Q254U7</accession>
<protein>
    <recommendedName>
        <fullName evidence="1">Queuine tRNA-ribosyltransferase</fullName>
        <ecNumber evidence="1">2.4.2.29</ecNumber>
    </recommendedName>
    <alternativeName>
        <fullName evidence="1">Guanine insertion enzyme</fullName>
    </alternativeName>
    <alternativeName>
        <fullName evidence="1">tRNA-guanine transglycosylase</fullName>
    </alternativeName>
</protein>
<comment type="function">
    <text evidence="1">Catalyzes the base-exchange of a guanine (G) residue with the queuine precursor 7-aminomethyl-7-deazaguanine (PreQ1) at position 34 (anticodon wobble position) in tRNAs with GU(N) anticodons (tRNA-Asp, -Asn, -His and -Tyr). Catalysis occurs through a double-displacement mechanism. The nucleophile active site attacks the C1' of nucleotide 34 to detach the guanine base from the RNA, forming a covalent enzyme-RNA intermediate. The proton acceptor active site deprotonates the incoming PreQ1, allowing a nucleophilic attack on the C1' of the ribose to form the product. After dissociation, two additional enzymatic reactions on the tRNA convert PreQ1 to queuine (Q), resulting in the hypermodified nucleoside queuosine (7-(((4,5-cis-dihydroxy-2-cyclopenten-1-yl)amino)methyl)-7-deazaguanosine).</text>
</comment>
<comment type="catalytic activity">
    <reaction evidence="1">
        <text>7-aminomethyl-7-carbaguanine + guanosine(34) in tRNA = 7-aminomethyl-7-carbaguanosine(34) in tRNA + guanine</text>
        <dbReference type="Rhea" id="RHEA:24104"/>
        <dbReference type="Rhea" id="RHEA-COMP:10341"/>
        <dbReference type="Rhea" id="RHEA-COMP:10342"/>
        <dbReference type="ChEBI" id="CHEBI:16235"/>
        <dbReference type="ChEBI" id="CHEBI:58703"/>
        <dbReference type="ChEBI" id="CHEBI:74269"/>
        <dbReference type="ChEBI" id="CHEBI:82833"/>
        <dbReference type="EC" id="2.4.2.29"/>
    </reaction>
</comment>
<comment type="cofactor">
    <cofactor evidence="1">
        <name>Zn(2+)</name>
        <dbReference type="ChEBI" id="CHEBI:29105"/>
    </cofactor>
    <text evidence="1">Binds 1 zinc ion per subunit.</text>
</comment>
<comment type="pathway">
    <text evidence="1">tRNA modification; tRNA-queuosine biosynthesis.</text>
</comment>
<comment type="subunit">
    <text evidence="1">Homodimer. Within each dimer, one monomer is responsible for RNA recognition and catalysis, while the other monomer binds to the replacement base PreQ1.</text>
</comment>
<comment type="similarity">
    <text evidence="1">Belongs to the queuine tRNA-ribosyltransferase family.</text>
</comment>
<sequence>MALKFHVIHQSKKSRARVGRIETDHGIIDTPAFVPVATNGALKGVVDHSNIPLMFCNTYHLLVHPGTESIAAMGGLHKFINRDAPIITDSGGFQIFSLAYGSVAEEIKSHGKKKGSSSILEITDEGVWFKSYRDGHKLFLSPEVSVQAQKDLGADIIIPLDELLPFHSDQQYFLSSCSRTYVWEKRSLDYHRNDPRHQSMYGVIHGGIDPEQRKIGCQFVEDHPFDGFAIGGSLGRNLNEMVPVVDITTSHLSKDRPVHLLGIGDLPSIQATVKFGIDSFDSSYPTKAARHGLILSSQGPIKIANQAYANDLSPIDPKCTCLTCSSNLSRAYLRHLFKVHEPNAGIWASIHNLHHMQEVMKNIRKQILNDEI</sequence>
<keyword id="KW-0328">Glycosyltransferase</keyword>
<keyword id="KW-0479">Metal-binding</keyword>
<keyword id="KW-0671">Queuosine biosynthesis</keyword>
<keyword id="KW-0808">Transferase</keyword>
<keyword id="KW-0819">tRNA processing</keyword>
<keyword id="KW-0862">Zinc</keyword>
<feature type="chain" id="PRO_1000016774" description="Queuine tRNA-ribosyltransferase">
    <location>
        <begin position="1"/>
        <end position="372"/>
    </location>
</feature>
<feature type="region of interest" description="RNA binding" evidence="1">
    <location>
        <begin position="262"/>
        <end position="268"/>
    </location>
</feature>
<feature type="region of interest" description="RNA binding; important for wobble base 34 recognition" evidence="1">
    <location>
        <begin position="286"/>
        <end position="290"/>
    </location>
</feature>
<feature type="active site" description="Proton acceptor" evidence="1">
    <location>
        <position position="89"/>
    </location>
</feature>
<feature type="active site" description="Nucleophile" evidence="1">
    <location>
        <position position="281"/>
    </location>
</feature>
<feature type="binding site" evidence="1">
    <location>
        <begin position="89"/>
        <end position="93"/>
    </location>
    <ligand>
        <name>substrate</name>
    </ligand>
</feature>
<feature type="binding site" evidence="1">
    <location>
        <position position="161"/>
    </location>
    <ligand>
        <name>substrate</name>
    </ligand>
</feature>
<feature type="binding site" evidence="1">
    <location>
        <position position="232"/>
    </location>
    <ligand>
        <name>substrate</name>
    </ligand>
</feature>
<feature type="binding site" evidence="1">
    <location>
        <position position="319"/>
    </location>
    <ligand>
        <name>Zn(2+)</name>
        <dbReference type="ChEBI" id="CHEBI:29105"/>
    </ligand>
</feature>
<feature type="binding site" evidence="1">
    <location>
        <position position="321"/>
    </location>
    <ligand>
        <name>Zn(2+)</name>
        <dbReference type="ChEBI" id="CHEBI:29105"/>
    </ligand>
</feature>
<feature type="binding site" evidence="1">
    <location>
        <position position="324"/>
    </location>
    <ligand>
        <name>Zn(2+)</name>
        <dbReference type="ChEBI" id="CHEBI:29105"/>
    </ligand>
</feature>
<feature type="binding site" evidence="1">
    <location>
        <position position="351"/>
    </location>
    <ligand>
        <name>Zn(2+)</name>
        <dbReference type="ChEBI" id="CHEBI:29105"/>
    </ligand>
</feature>